<sequence length="1070" mass="120893">MLGVGNEGMSTLPGLNQIQFEGFCRFIDRGLTEELFKFPKIEDTDQEIEFQLFVETYQLVEPSIKEKDAVYESLTYSSELYVSAGLIWKNSKNIQEQTIFIGNIPLMNSLGTSIVNGIYRIVINQILQSPGIYYQSELDHKGISVYTGTIISDWGGRLELEIDRKARIWARVSRKQKISILVLSSAMGSNLNEILENVCYPEIFLSFLNDKEEKKIGSKESAILEFYRQFACVGGDPVFPESLCRELQKKFFQQRCELGEIGRRNMNRRLNLDIPQNNTFLLPRDILTAADHLIGMKFRMGTLDDMNHLKNKRIRSVADLLQDQFGLALVRLENMVRGTICGAIRYKLIPTPQNLVTSTPLTTTYESFFGLHPLSQVLDRTNPLTQIVHGRKLSYLGPGGLTGRTASFRIRDIHSSHYGRICPIDTSEGINVGLIGSLAIHARIGRWGSIESPFFEISERSKRIHMLYLSPSRDEYYMIATGNYLALNQGNQEEQIVPARYRQEFLTIAWEQVHLRSIFSFQYFSIGASLIPFIEHNDANRALMSSNMQRQAVPLSQSEKCIVGTGLERQVALDSGTLAIAEHEGKIIYKDTNKIVLFGSGETLSVPLVIYRRSNKNTCMHQKSQVQRGKCIKRGQILADGAATVGGELSLGKNVLVAYMPWEGYNSEDAVLISDRLVYEDIYTSFHIRKYEIQTHVTSNGPERITNKIPHLEVHLLRNLDKNGLVILGSWVEAGDILVGKLTPQMAKESSYAPEDRLLRAILGIQVSTSKETCLKLPIGGRGRVIDVRWLHKKGGSGYNPETIHIYILQKREIKVGDKVAGRHGNKGIVSKILARQDMPYLQDGRPVDMVFNPLGVPSRMNVGQIFECSLGLAGDVLDRHYRIAPFDERYEQEASRKLVFSELYQASKQTSNPWIFEPEYPGKSRIFDGRTGTPFEQPVIIGNPYILKLIHQVDDKIHGRSSGHYALVTQQPLKGRAKQGGQRVGEMEVWALEGFGVAHILQEMLTYKSDHIKARQEVLGTTIIGGTISKPVDAPESFRLLVRELRSLALELNHFLVSEKNFRIHRKEV</sequence>
<proteinExistence type="inferred from homology"/>
<geneLocation type="chloroplast"/>
<gene>
    <name evidence="1" type="primary">rpoB</name>
</gene>
<evidence type="ECO:0000255" key="1">
    <source>
        <dbReference type="HAMAP-Rule" id="MF_01321"/>
    </source>
</evidence>
<name>RPOB_LOTJA</name>
<accession>Q9BBS9</accession>
<feature type="chain" id="PRO_0000048028" description="DNA-directed RNA polymerase subunit beta">
    <location>
        <begin position="1"/>
        <end position="1070"/>
    </location>
</feature>
<dbReference type="EC" id="2.7.7.6" evidence="1"/>
<dbReference type="EMBL" id="AP002983">
    <property type="protein sequence ID" value="BAB33194.1"/>
    <property type="molecule type" value="Genomic_DNA"/>
</dbReference>
<dbReference type="RefSeq" id="NP_084796.1">
    <property type="nucleotide sequence ID" value="NC_002694.1"/>
</dbReference>
<dbReference type="SMR" id="Q9BBS9"/>
<dbReference type="GeneID" id="802853"/>
<dbReference type="GO" id="GO:0009507">
    <property type="term" value="C:chloroplast"/>
    <property type="evidence" value="ECO:0007669"/>
    <property type="project" value="UniProtKB-SubCell"/>
</dbReference>
<dbReference type="GO" id="GO:0000428">
    <property type="term" value="C:DNA-directed RNA polymerase complex"/>
    <property type="evidence" value="ECO:0007669"/>
    <property type="project" value="UniProtKB-KW"/>
</dbReference>
<dbReference type="GO" id="GO:0005739">
    <property type="term" value="C:mitochondrion"/>
    <property type="evidence" value="ECO:0007669"/>
    <property type="project" value="GOC"/>
</dbReference>
<dbReference type="GO" id="GO:0003677">
    <property type="term" value="F:DNA binding"/>
    <property type="evidence" value="ECO:0007669"/>
    <property type="project" value="UniProtKB-UniRule"/>
</dbReference>
<dbReference type="GO" id="GO:0003899">
    <property type="term" value="F:DNA-directed RNA polymerase activity"/>
    <property type="evidence" value="ECO:0007669"/>
    <property type="project" value="UniProtKB-UniRule"/>
</dbReference>
<dbReference type="GO" id="GO:0032549">
    <property type="term" value="F:ribonucleoside binding"/>
    <property type="evidence" value="ECO:0007669"/>
    <property type="project" value="InterPro"/>
</dbReference>
<dbReference type="GO" id="GO:0006351">
    <property type="term" value="P:DNA-templated transcription"/>
    <property type="evidence" value="ECO:0007669"/>
    <property type="project" value="UniProtKB-UniRule"/>
</dbReference>
<dbReference type="CDD" id="cd00653">
    <property type="entry name" value="RNA_pol_B_RPB2"/>
    <property type="match status" value="1"/>
</dbReference>
<dbReference type="FunFam" id="3.90.1110.10:FF:000009">
    <property type="entry name" value="DNA-directed RNA polymerase subunit beta"/>
    <property type="match status" value="1"/>
</dbReference>
<dbReference type="Gene3D" id="2.40.50.100">
    <property type="match status" value="1"/>
</dbReference>
<dbReference type="Gene3D" id="2.40.50.150">
    <property type="match status" value="1"/>
</dbReference>
<dbReference type="Gene3D" id="3.90.1100.10">
    <property type="match status" value="1"/>
</dbReference>
<dbReference type="Gene3D" id="2.30.150.10">
    <property type="entry name" value="DNA-directed RNA polymerase, beta subunit, external 1 domain"/>
    <property type="match status" value="1"/>
</dbReference>
<dbReference type="Gene3D" id="2.40.270.10">
    <property type="entry name" value="DNA-directed RNA polymerase, subunit 2, domain 6"/>
    <property type="match status" value="2"/>
</dbReference>
<dbReference type="Gene3D" id="3.90.1800.10">
    <property type="entry name" value="RNA polymerase alpha subunit dimerisation domain"/>
    <property type="match status" value="1"/>
</dbReference>
<dbReference type="Gene3D" id="3.90.1110.10">
    <property type="entry name" value="RNA polymerase Rpb2, domain 2"/>
    <property type="match status" value="1"/>
</dbReference>
<dbReference type="HAMAP" id="MF_01321">
    <property type="entry name" value="RNApol_bact_RpoB"/>
    <property type="match status" value="1"/>
</dbReference>
<dbReference type="InterPro" id="IPR042107">
    <property type="entry name" value="DNA-dir_RNA_pol_bsu_ext_1_sf"/>
</dbReference>
<dbReference type="InterPro" id="IPR015712">
    <property type="entry name" value="DNA-dir_RNA_pol_su2"/>
</dbReference>
<dbReference type="InterPro" id="IPR007120">
    <property type="entry name" value="DNA-dir_RNAP_su2_dom"/>
</dbReference>
<dbReference type="InterPro" id="IPR037033">
    <property type="entry name" value="DNA-dir_RNAP_su2_hyb_sf"/>
</dbReference>
<dbReference type="InterPro" id="IPR010243">
    <property type="entry name" value="RNA_pol_bsu_bac"/>
</dbReference>
<dbReference type="InterPro" id="IPR007121">
    <property type="entry name" value="RNA_pol_bsu_CS"/>
</dbReference>
<dbReference type="InterPro" id="IPR007644">
    <property type="entry name" value="RNA_pol_bsu_protrusion"/>
</dbReference>
<dbReference type="InterPro" id="IPR007642">
    <property type="entry name" value="RNA_pol_Rpb2_2"/>
</dbReference>
<dbReference type="InterPro" id="IPR037034">
    <property type="entry name" value="RNA_pol_Rpb2_2_sf"/>
</dbReference>
<dbReference type="InterPro" id="IPR007645">
    <property type="entry name" value="RNA_pol_Rpb2_3"/>
</dbReference>
<dbReference type="InterPro" id="IPR007641">
    <property type="entry name" value="RNA_pol_Rpb2_7"/>
</dbReference>
<dbReference type="InterPro" id="IPR014724">
    <property type="entry name" value="RNA_pol_RPB2_OB-fold"/>
</dbReference>
<dbReference type="NCBIfam" id="NF001616">
    <property type="entry name" value="PRK00405.1"/>
    <property type="match status" value="1"/>
</dbReference>
<dbReference type="PANTHER" id="PTHR20856">
    <property type="entry name" value="DNA-DIRECTED RNA POLYMERASE I SUBUNIT 2"/>
    <property type="match status" value="1"/>
</dbReference>
<dbReference type="Pfam" id="PF04563">
    <property type="entry name" value="RNA_pol_Rpb2_1"/>
    <property type="match status" value="1"/>
</dbReference>
<dbReference type="Pfam" id="PF04561">
    <property type="entry name" value="RNA_pol_Rpb2_2"/>
    <property type="match status" value="1"/>
</dbReference>
<dbReference type="Pfam" id="PF04565">
    <property type="entry name" value="RNA_pol_Rpb2_3"/>
    <property type="match status" value="1"/>
</dbReference>
<dbReference type="Pfam" id="PF00562">
    <property type="entry name" value="RNA_pol_Rpb2_6"/>
    <property type="match status" value="1"/>
</dbReference>
<dbReference type="Pfam" id="PF04560">
    <property type="entry name" value="RNA_pol_Rpb2_7"/>
    <property type="match status" value="1"/>
</dbReference>
<dbReference type="SUPFAM" id="SSF64484">
    <property type="entry name" value="beta and beta-prime subunits of DNA dependent RNA-polymerase"/>
    <property type="match status" value="1"/>
</dbReference>
<dbReference type="PROSITE" id="PS01166">
    <property type="entry name" value="RNA_POL_BETA"/>
    <property type="match status" value="1"/>
</dbReference>
<organism>
    <name type="scientific">Lotus japonicus</name>
    <name type="common">Lotus corniculatus var. japonicus</name>
    <dbReference type="NCBI Taxonomy" id="34305"/>
    <lineage>
        <taxon>Eukaryota</taxon>
        <taxon>Viridiplantae</taxon>
        <taxon>Streptophyta</taxon>
        <taxon>Embryophyta</taxon>
        <taxon>Tracheophyta</taxon>
        <taxon>Spermatophyta</taxon>
        <taxon>Magnoliopsida</taxon>
        <taxon>eudicotyledons</taxon>
        <taxon>Gunneridae</taxon>
        <taxon>Pentapetalae</taxon>
        <taxon>rosids</taxon>
        <taxon>fabids</taxon>
        <taxon>Fabales</taxon>
        <taxon>Fabaceae</taxon>
        <taxon>Papilionoideae</taxon>
        <taxon>50 kb inversion clade</taxon>
        <taxon>NPAAA clade</taxon>
        <taxon>Hologalegina</taxon>
        <taxon>robinioid clade</taxon>
        <taxon>Loteae</taxon>
        <taxon>Lotus</taxon>
    </lineage>
</organism>
<comment type="function">
    <text evidence="1">DNA-dependent RNA polymerase catalyzes the transcription of DNA into RNA using the four ribonucleoside triphosphates as substrates.</text>
</comment>
<comment type="catalytic activity">
    <reaction evidence="1">
        <text>RNA(n) + a ribonucleoside 5'-triphosphate = RNA(n+1) + diphosphate</text>
        <dbReference type="Rhea" id="RHEA:21248"/>
        <dbReference type="Rhea" id="RHEA-COMP:14527"/>
        <dbReference type="Rhea" id="RHEA-COMP:17342"/>
        <dbReference type="ChEBI" id="CHEBI:33019"/>
        <dbReference type="ChEBI" id="CHEBI:61557"/>
        <dbReference type="ChEBI" id="CHEBI:140395"/>
        <dbReference type="EC" id="2.7.7.6"/>
    </reaction>
</comment>
<comment type="subunit">
    <text evidence="1">In plastids the minimal PEP RNA polymerase catalytic core is composed of four subunits: alpha, beta, beta', and beta''. When a (nuclear-encoded) sigma factor is associated with the core the holoenzyme is formed, which can initiate transcription.</text>
</comment>
<comment type="subcellular location">
    <subcellularLocation>
        <location>Plastid</location>
        <location>Chloroplast</location>
    </subcellularLocation>
</comment>
<comment type="similarity">
    <text evidence="1">Belongs to the RNA polymerase beta chain family.</text>
</comment>
<protein>
    <recommendedName>
        <fullName evidence="1">DNA-directed RNA polymerase subunit beta</fullName>
        <ecNumber evidence="1">2.7.7.6</ecNumber>
    </recommendedName>
    <alternativeName>
        <fullName evidence="1">PEP</fullName>
    </alternativeName>
    <alternativeName>
        <fullName evidence="1">Plastid-encoded RNA polymerase subunit beta</fullName>
        <shortName evidence="1">RNA polymerase subunit beta</shortName>
    </alternativeName>
</protein>
<reference key="1">
    <citation type="journal article" date="2000" name="DNA Res.">
        <title>Complete structure of the chloroplast genome of a legume, Lotus japonicus.</title>
        <authorList>
            <person name="Kato T."/>
            <person name="Kaneko T."/>
            <person name="Sato S."/>
            <person name="Nakamura Y."/>
            <person name="Tabata S."/>
        </authorList>
    </citation>
    <scope>NUCLEOTIDE SEQUENCE [LARGE SCALE GENOMIC DNA]</scope>
    <source>
        <strain>cv. Miyakojima MG-20</strain>
    </source>
</reference>
<keyword id="KW-0150">Chloroplast</keyword>
<keyword id="KW-0240">DNA-directed RNA polymerase</keyword>
<keyword id="KW-0548">Nucleotidyltransferase</keyword>
<keyword id="KW-0934">Plastid</keyword>
<keyword id="KW-0804">Transcription</keyword>
<keyword id="KW-0808">Transferase</keyword>